<keyword id="KW-0030">Aminoacyl-tRNA synthetase</keyword>
<keyword id="KW-0067">ATP-binding</keyword>
<keyword id="KW-0963">Cytoplasm</keyword>
<keyword id="KW-0436">Ligase</keyword>
<keyword id="KW-0479">Metal-binding</keyword>
<keyword id="KW-0547">Nucleotide-binding</keyword>
<keyword id="KW-0648">Protein biosynthesis</keyword>
<keyword id="KW-1185">Reference proteome</keyword>
<keyword id="KW-0694">RNA-binding</keyword>
<keyword id="KW-0820">tRNA-binding</keyword>
<keyword id="KW-0862">Zinc</keyword>
<gene>
    <name evidence="1" type="primary">thrS</name>
    <name type="ordered locus">lmo1559</name>
</gene>
<name>SYT_LISMO</name>
<dbReference type="EC" id="6.1.1.3" evidence="1"/>
<dbReference type="EMBL" id="AL591979">
    <property type="protein sequence ID" value="CAC99637.1"/>
    <property type="molecule type" value="Genomic_DNA"/>
</dbReference>
<dbReference type="PIR" id="AG1269">
    <property type="entry name" value="AG1269"/>
</dbReference>
<dbReference type="RefSeq" id="NP_465084.1">
    <property type="nucleotide sequence ID" value="NC_003210.1"/>
</dbReference>
<dbReference type="RefSeq" id="WP_010989741.1">
    <property type="nucleotide sequence ID" value="NZ_CP149495.1"/>
</dbReference>
<dbReference type="SMR" id="Q8Y6X2"/>
<dbReference type="STRING" id="169963.gene:17594216"/>
<dbReference type="PaxDb" id="169963-lmo1559"/>
<dbReference type="EnsemblBacteria" id="CAC99637">
    <property type="protein sequence ID" value="CAC99637"/>
    <property type="gene ID" value="CAC99637"/>
</dbReference>
<dbReference type="GeneID" id="986974"/>
<dbReference type="KEGG" id="lmo:lmo1559"/>
<dbReference type="PATRIC" id="fig|169963.11.peg.1600"/>
<dbReference type="eggNOG" id="COG0441">
    <property type="taxonomic scope" value="Bacteria"/>
</dbReference>
<dbReference type="HOGENOM" id="CLU_008554_0_1_9"/>
<dbReference type="OrthoDB" id="9802304at2"/>
<dbReference type="PhylomeDB" id="Q8Y6X2"/>
<dbReference type="BioCyc" id="LMON169963:LMO1559-MONOMER"/>
<dbReference type="Proteomes" id="UP000000817">
    <property type="component" value="Chromosome"/>
</dbReference>
<dbReference type="GO" id="GO:0005737">
    <property type="term" value="C:cytoplasm"/>
    <property type="evidence" value="ECO:0007669"/>
    <property type="project" value="UniProtKB-SubCell"/>
</dbReference>
<dbReference type="GO" id="GO:0005524">
    <property type="term" value="F:ATP binding"/>
    <property type="evidence" value="ECO:0007669"/>
    <property type="project" value="UniProtKB-UniRule"/>
</dbReference>
<dbReference type="GO" id="GO:0140096">
    <property type="term" value="F:catalytic activity, acting on a protein"/>
    <property type="evidence" value="ECO:0007669"/>
    <property type="project" value="UniProtKB-ARBA"/>
</dbReference>
<dbReference type="GO" id="GO:0046872">
    <property type="term" value="F:metal ion binding"/>
    <property type="evidence" value="ECO:0007669"/>
    <property type="project" value="UniProtKB-KW"/>
</dbReference>
<dbReference type="GO" id="GO:0004829">
    <property type="term" value="F:threonine-tRNA ligase activity"/>
    <property type="evidence" value="ECO:0000318"/>
    <property type="project" value="GO_Central"/>
</dbReference>
<dbReference type="GO" id="GO:0016740">
    <property type="term" value="F:transferase activity"/>
    <property type="evidence" value="ECO:0007669"/>
    <property type="project" value="UniProtKB-ARBA"/>
</dbReference>
<dbReference type="GO" id="GO:0000049">
    <property type="term" value="F:tRNA binding"/>
    <property type="evidence" value="ECO:0007669"/>
    <property type="project" value="UniProtKB-KW"/>
</dbReference>
<dbReference type="GO" id="GO:0006435">
    <property type="term" value="P:threonyl-tRNA aminoacylation"/>
    <property type="evidence" value="ECO:0000318"/>
    <property type="project" value="GO_Central"/>
</dbReference>
<dbReference type="CDD" id="cd01667">
    <property type="entry name" value="TGS_ThrRS"/>
    <property type="match status" value="1"/>
</dbReference>
<dbReference type="CDD" id="cd00860">
    <property type="entry name" value="ThrRS_anticodon"/>
    <property type="match status" value="1"/>
</dbReference>
<dbReference type="CDD" id="cd00771">
    <property type="entry name" value="ThrRS_core"/>
    <property type="match status" value="1"/>
</dbReference>
<dbReference type="FunFam" id="3.10.20.30:FF:000005">
    <property type="entry name" value="Threonine--tRNA ligase"/>
    <property type="match status" value="1"/>
</dbReference>
<dbReference type="FunFam" id="3.30.54.20:FF:000002">
    <property type="entry name" value="Threonine--tRNA ligase"/>
    <property type="match status" value="1"/>
</dbReference>
<dbReference type="FunFam" id="3.30.930.10:FF:000002">
    <property type="entry name" value="Threonine--tRNA ligase"/>
    <property type="match status" value="1"/>
</dbReference>
<dbReference type="FunFam" id="3.40.50.800:FF:000001">
    <property type="entry name" value="Threonine--tRNA ligase"/>
    <property type="match status" value="1"/>
</dbReference>
<dbReference type="FunFam" id="3.30.980.10:FF:000005">
    <property type="entry name" value="Threonyl-tRNA synthetase, mitochondrial"/>
    <property type="match status" value="1"/>
</dbReference>
<dbReference type="Gene3D" id="3.10.20.30">
    <property type="match status" value="1"/>
</dbReference>
<dbReference type="Gene3D" id="3.30.54.20">
    <property type="match status" value="1"/>
</dbReference>
<dbReference type="Gene3D" id="3.40.50.800">
    <property type="entry name" value="Anticodon-binding domain"/>
    <property type="match status" value="1"/>
</dbReference>
<dbReference type="Gene3D" id="3.30.930.10">
    <property type="entry name" value="Bira Bifunctional Protein, Domain 2"/>
    <property type="match status" value="1"/>
</dbReference>
<dbReference type="Gene3D" id="3.30.980.10">
    <property type="entry name" value="Threonyl-trna Synthetase, Chain A, domain 2"/>
    <property type="match status" value="1"/>
</dbReference>
<dbReference type="HAMAP" id="MF_00184">
    <property type="entry name" value="Thr_tRNA_synth"/>
    <property type="match status" value="1"/>
</dbReference>
<dbReference type="InterPro" id="IPR002314">
    <property type="entry name" value="aa-tRNA-synt_IIb"/>
</dbReference>
<dbReference type="InterPro" id="IPR006195">
    <property type="entry name" value="aa-tRNA-synth_II"/>
</dbReference>
<dbReference type="InterPro" id="IPR045864">
    <property type="entry name" value="aa-tRNA-synth_II/BPL/LPL"/>
</dbReference>
<dbReference type="InterPro" id="IPR004154">
    <property type="entry name" value="Anticodon-bd"/>
</dbReference>
<dbReference type="InterPro" id="IPR036621">
    <property type="entry name" value="Anticodon-bd_dom_sf"/>
</dbReference>
<dbReference type="InterPro" id="IPR012675">
    <property type="entry name" value="Beta-grasp_dom_sf"/>
</dbReference>
<dbReference type="InterPro" id="IPR004095">
    <property type="entry name" value="TGS"/>
</dbReference>
<dbReference type="InterPro" id="IPR012676">
    <property type="entry name" value="TGS-like"/>
</dbReference>
<dbReference type="InterPro" id="IPR002320">
    <property type="entry name" value="Thr-tRNA-ligase_IIa"/>
</dbReference>
<dbReference type="InterPro" id="IPR018163">
    <property type="entry name" value="Thr/Ala-tRNA-synth_IIc_edit"/>
</dbReference>
<dbReference type="InterPro" id="IPR047246">
    <property type="entry name" value="ThrRS_anticodon"/>
</dbReference>
<dbReference type="InterPro" id="IPR033728">
    <property type="entry name" value="ThrRS_core"/>
</dbReference>
<dbReference type="InterPro" id="IPR012947">
    <property type="entry name" value="tRNA_SAD"/>
</dbReference>
<dbReference type="NCBIfam" id="TIGR00418">
    <property type="entry name" value="thrS"/>
    <property type="match status" value="1"/>
</dbReference>
<dbReference type="PANTHER" id="PTHR11451:SF56">
    <property type="entry name" value="THREONINE--TRNA LIGASE 1"/>
    <property type="match status" value="1"/>
</dbReference>
<dbReference type="PANTHER" id="PTHR11451">
    <property type="entry name" value="THREONINE-TRNA LIGASE"/>
    <property type="match status" value="1"/>
</dbReference>
<dbReference type="Pfam" id="PF03129">
    <property type="entry name" value="HGTP_anticodon"/>
    <property type="match status" value="1"/>
</dbReference>
<dbReference type="Pfam" id="PF02824">
    <property type="entry name" value="TGS"/>
    <property type="match status" value="1"/>
</dbReference>
<dbReference type="Pfam" id="PF00587">
    <property type="entry name" value="tRNA-synt_2b"/>
    <property type="match status" value="1"/>
</dbReference>
<dbReference type="Pfam" id="PF07973">
    <property type="entry name" value="tRNA_SAD"/>
    <property type="match status" value="1"/>
</dbReference>
<dbReference type="PRINTS" id="PR01047">
    <property type="entry name" value="TRNASYNTHTHR"/>
</dbReference>
<dbReference type="SMART" id="SM00863">
    <property type="entry name" value="tRNA_SAD"/>
    <property type="match status" value="1"/>
</dbReference>
<dbReference type="SUPFAM" id="SSF52954">
    <property type="entry name" value="Class II aaRS ABD-related"/>
    <property type="match status" value="1"/>
</dbReference>
<dbReference type="SUPFAM" id="SSF55681">
    <property type="entry name" value="Class II aaRS and biotin synthetases"/>
    <property type="match status" value="1"/>
</dbReference>
<dbReference type="SUPFAM" id="SSF81271">
    <property type="entry name" value="TGS-like"/>
    <property type="match status" value="1"/>
</dbReference>
<dbReference type="SUPFAM" id="SSF55186">
    <property type="entry name" value="ThrRS/AlaRS common domain"/>
    <property type="match status" value="1"/>
</dbReference>
<dbReference type="PROSITE" id="PS50862">
    <property type="entry name" value="AA_TRNA_LIGASE_II"/>
    <property type="match status" value="1"/>
</dbReference>
<dbReference type="PROSITE" id="PS51880">
    <property type="entry name" value="TGS"/>
    <property type="match status" value="1"/>
</dbReference>
<accession>Q8Y6X2</accession>
<comment type="function">
    <text evidence="1">Catalyzes the attachment of threonine to tRNA(Thr) in a two-step reaction: L-threonine is first activated by ATP to form Thr-AMP and then transferred to the acceptor end of tRNA(Thr). Also edits incorrectly charged L-seryl-tRNA(Thr).</text>
</comment>
<comment type="catalytic activity">
    <reaction evidence="1">
        <text>tRNA(Thr) + L-threonine + ATP = L-threonyl-tRNA(Thr) + AMP + diphosphate + H(+)</text>
        <dbReference type="Rhea" id="RHEA:24624"/>
        <dbReference type="Rhea" id="RHEA-COMP:9670"/>
        <dbReference type="Rhea" id="RHEA-COMP:9704"/>
        <dbReference type="ChEBI" id="CHEBI:15378"/>
        <dbReference type="ChEBI" id="CHEBI:30616"/>
        <dbReference type="ChEBI" id="CHEBI:33019"/>
        <dbReference type="ChEBI" id="CHEBI:57926"/>
        <dbReference type="ChEBI" id="CHEBI:78442"/>
        <dbReference type="ChEBI" id="CHEBI:78534"/>
        <dbReference type="ChEBI" id="CHEBI:456215"/>
        <dbReference type="EC" id="6.1.1.3"/>
    </reaction>
</comment>
<comment type="cofactor">
    <cofactor evidence="1">
        <name>Zn(2+)</name>
        <dbReference type="ChEBI" id="CHEBI:29105"/>
    </cofactor>
    <text evidence="1">Binds 1 zinc ion per subunit.</text>
</comment>
<comment type="subunit">
    <text evidence="1">Homodimer.</text>
</comment>
<comment type="subcellular location">
    <subcellularLocation>
        <location evidence="1">Cytoplasm</location>
    </subcellularLocation>
</comment>
<comment type="similarity">
    <text evidence="1">Belongs to the class-II aminoacyl-tRNA synthetase family.</text>
</comment>
<proteinExistence type="inferred from homology"/>
<sequence length="640" mass="73241">MKITFPDGAVKEFEPGVSTADIAASISPGLKKKALAGKLNGELLDLVTPIHEDGAIEIVTPDHEDALGILRHSTAHLMAQALKRLYPDVKFGVGPAIESGFYYDIDTEAVISDESLVEIEKEMQKIVRENVPIEREVVSREEAIKRFKAIGDQYKLELIEAIPEDETVTIYTQGEFFDLCRGVHVPSTGKIQVFKLLSVAGAYWRGDSNNKMLQRIYGTAFFDKNGLKEFIQMQKEAKERDHRKLGKELELFTNSIEVGQGLPLWLPKGATIRRVIERYIVDKEERLGYNHVYTPIMANVELYKTSGHWDHYHEDMFPTMKMDNEELVLRPMNCPHHMMIYKNDIHSYRELPIRIAELGMMHRYEMSGALSGLQRVRGMTLNDAHVFVRPDQIKDEFKRVVELILEVYKDFDITDYSFRLSYRDPKNTEKYFDDDAMWEKAQAMLKSAMDEMEMDYFEAEGEAAFYGPKLDVQVKTAIGKEETLSTVQLDFLLPERFDLTYIGEDGEKHRPVVIHRGVVSTMERFVAYLIEEYKGAFPTWLAPVQMEIIPVNADAHLDYAKGVQDKLQRAGLRAEVDDRNEKLGYKIREAQTKKIPYALVLGDQEVEAGSVNVRRYGSKDSETMDLDAFIAQVVAEVSKY</sequence>
<feature type="chain" id="PRO_0000101004" description="Threonine--tRNA ligase">
    <location>
        <begin position="1"/>
        <end position="640"/>
    </location>
</feature>
<feature type="domain" description="TGS" evidence="2">
    <location>
        <begin position="1"/>
        <end position="60"/>
    </location>
</feature>
<feature type="region of interest" description="Catalytic" evidence="1">
    <location>
        <begin position="241"/>
        <end position="538"/>
    </location>
</feature>
<feature type="binding site" evidence="1">
    <location>
        <position position="334"/>
    </location>
    <ligand>
        <name>Zn(2+)</name>
        <dbReference type="ChEBI" id="CHEBI:29105"/>
    </ligand>
</feature>
<feature type="binding site" evidence="1">
    <location>
        <position position="385"/>
    </location>
    <ligand>
        <name>Zn(2+)</name>
        <dbReference type="ChEBI" id="CHEBI:29105"/>
    </ligand>
</feature>
<feature type="binding site" evidence="1">
    <location>
        <position position="515"/>
    </location>
    <ligand>
        <name>Zn(2+)</name>
        <dbReference type="ChEBI" id="CHEBI:29105"/>
    </ligand>
</feature>
<reference key="1">
    <citation type="journal article" date="2001" name="Science">
        <title>Comparative genomics of Listeria species.</title>
        <authorList>
            <person name="Glaser P."/>
            <person name="Frangeul L."/>
            <person name="Buchrieser C."/>
            <person name="Rusniok C."/>
            <person name="Amend A."/>
            <person name="Baquero F."/>
            <person name="Berche P."/>
            <person name="Bloecker H."/>
            <person name="Brandt P."/>
            <person name="Chakraborty T."/>
            <person name="Charbit A."/>
            <person name="Chetouani F."/>
            <person name="Couve E."/>
            <person name="de Daruvar A."/>
            <person name="Dehoux P."/>
            <person name="Domann E."/>
            <person name="Dominguez-Bernal G."/>
            <person name="Duchaud E."/>
            <person name="Durant L."/>
            <person name="Dussurget O."/>
            <person name="Entian K.-D."/>
            <person name="Fsihi H."/>
            <person name="Garcia-del Portillo F."/>
            <person name="Garrido P."/>
            <person name="Gautier L."/>
            <person name="Goebel W."/>
            <person name="Gomez-Lopez N."/>
            <person name="Hain T."/>
            <person name="Hauf J."/>
            <person name="Jackson D."/>
            <person name="Jones L.-M."/>
            <person name="Kaerst U."/>
            <person name="Kreft J."/>
            <person name="Kuhn M."/>
            <person name="Kunst F."/>
            <person name="Kurapkat G."/>
            <person name="Madueno E."/>
            <person name="Maitournam A."/>
            <person name="Mata Vicente J."/>
            <person name="Ng E."/>
            <person name="Nedjari H."/>
            <person name="Nordsiek G."/>
            <person name="Novella S."/>
            <person name="de Pablos B."/>
            <person name="Perez-Diaz J.-C."/>
            <person name="Purcell R."/>
            <person name="Remmel B."/>
            <person name="Rose M."/>
            <person name="Schlueter T."/>
            <person name="Simoes N."/>
            <person name="Tierrez A."/>
            <person name="Vazquez-Boland J.-A."/>
            <person name="Voss H."/>
            <person name="Wehland J."/>
            <person name="Cossart P."/>
        </authorList>
    </citation>
    <scope>NUCLEOTIDE SEQUENCE [LARGE SCALE GENOMIC DNA]</scope>
    <source>
        <strain>ATCC BAA-679 / EGD-e</strain>
    </source>
</reference>
<evidence type="ECO:0000255" key="1">
    <source>
        <dbReference type="HAMAP-Rule" id="MF_00184"/>
    </source>
</evidence>
<evidence type="ECO:0000255" key="2">
    <source>
        <dbReference type="PROSITE-ProRule" id="PRU01228"/>
    </source>
</evidence>
<protein>
    <recommendedName>
        <fullName evidence="1">Threonine--tRNA ligase</fullName>
        <ecNumber evidence="1">6.1.1.3</ecNumber>
    </recommendedName>
    <alternativeName>
        <fullName evidence="1">Threonyl-tRNA synthetase</fullName>
        <shortName evidence="1">ThrRS</shortName>
    </alternativeName>
</protein>
<organism>
    <name type="scientific">Listeria monocytogenes serovar 1/2a (strain ATCC BAA-679 / EGD-e)</name>
    <dbReference type="NCBI Taxonomy" id="169963"/>
    <lineage>
        <taxon>Bacteria</taxon>
        <taxon>Bacillati</taxon>
        <taxon>Bacillota</taxon>
        <taxon>Bacilli</taxon>
        <taxon>Bacillales</taxon>
        <taxon>Listeriaceae</taxon>
        <taxon>Listeria</taxon>
    </lineage>
</organism>